<feature type="chain" id="PRO_0000225507" description="DNA-directed RNA polymerase subunit beta'">
    <location>
        <begin position="1"/>
        <end position="1203"/>
    </location>
</feature>
<feature type="binding site" evidence="1">
    <location>
        <position position="60"/>
    </location>
    <ligand>
        <name>Zn(2+)</name>
        <dbReference type="ChEBI" id="CHEBI:29105"/>
        <label>1</label>
    </ligand>
</feature>
<feature type="binding site" evidence="1">
    <location>
        <position position="62"/>
    </location>
    <ligand>
        <name>Zn(2+)</name>
        <dbReference type="ChEBI" id="CHEBI:29105"/>
        <label>1</label>
    </ligand>
</feature>
<feature type="binding site" evidence="1">
    <location>
        <position position="75"/>
    </location>
    <ligand>
        <name>Zn(2+)</name>
        <dbReference type="ChEBI" id="CHEBI:29105"/>
        <label>1</label>
    </ligand>
</feature>
<feature type="binding site" evidence="1">
    <location>
        <position position="78"/>
    </location>
    <ligand>
        <name>Zn(2+)</name>
        <dbReference type="ChEBI" id="CHEBI:29105"/>
        <label>1</label>
    </ligand>
</feature>
<feature type="binding site" evidence="1">
    <location>
        <position position="449"/>
    </location>
    <ligand>
        <name>Mg(2+)</name>
        <dbReference type="ChEBI" id="CHEBI:18420"/>
    </ligand>
</feature>
<feature type="binding site" evidence="1">
    <location>
        <position position="451"/>
    </location>
    <ligand>
        <name>Mg(2+)</name>
        <dbReference type="ChEBI" id="CHEBI:18420"/>
    </ligand>
</feature>
<feature type="binding site" evidence="1">
    <location>
        <position position="453"/>
    </location>
    <ligand>
        <name>Mg(2+)</name>
        <dbReference type="ChEBI" id="CHEBI:18420"/>
    </ligand>
</feature>
<feature type="binding site" evidence="1">
    <location>
        <position position="818"/>
    </location>
    <ligand>
        <name>Zn(2+)</name>
        <dbReference type="ChEBI" id="CHEBI:29105"/>
        <label>2</label>
    </ligand>
</feature>
<feature type="binding site" evidence="1">
    <location>
        <position position="892"/>
    </location>
    <ligand>
        <name>Zn(2+)</name>
        <dbReference type="ChEBI" id="CHEBI:29105"/>
        <label>2</label>
    </ligand>
</feature>
<feature type="binding site" evidence="1">
    <location>
        <position position="899"/>
    </location>
    <ligand>
        <name>Zn(2+)</name>
        <dbReference type="ChEBI" id="CHEBI:29105"/>
        <label>2</label>
    </ligand>
</feature>
<feature type="binding site" evidence="1">
    <location>
        <position position="902"/>
    </location>
    <ligand>
        <name>Zn(2+)</name>
        <dbReference type="ChEBI" id="CHEBI:29105"/>
        <label>2</label>
    </ligand>
</feature>
<reference key="1">
    <citation type="journal article" date="2004" name="Nucleic Acids Res.">
        <title>The genome sequence of Bacillus cereus ATCC 10987 reveals metabolic adaptations and a large plasmid related to Bacillus anthracis pXO1.</title>
        <authorList>
            <person name="Rasko D.A."/>
            <person name="Ravel J."/>
            <person name="Oekstad O.A."/>
            <person name="Helgason E."/>
            <person name="Cer R.Z."/>
            <person name="Jiang L."/>
            <person name="Shores K.A."/>
            <person name="Fouts D.E."/>
            <person name="Tourasse N.J."/>
            <person name="Angiuoli S.V."/>
            <person name="Kolonay J.F."/>
            <person name="Nelson W.C."/>
            <person name="Kolstoe A.-B."/>
            <person name="Fraser C.M."/>
            <person name="Read T.D."/>
        </authorList>
    </citation>
    <scope>NUCLEOTIDE SEQUENCE [LARGE SCALE GENOMIC DNA]</scope>
    <source>
        <strain>ATCC 10987 / NRS 248</strain>
    </source>
</reference>
<dbReference type="EC" id="2.7.7.6" evidence="1"/>
<dbReference type="EMBL" id="AE017194">
    <property type="protein sequence ID" value="AAS39039.1"/>
    <property type="molecule type" value="Genomic_DNA"/>
</dbReference>
<dbReference type="SMR" id="Q73FA3"/>
<dbReference type="KEGG" id="bca:BCE_0103"/>
<dbReference type="HOGENOM" id="CLU_000524_3_1_9"/>
<dbReference type="Proteomes" id="UP000002527">
    <property type="component" value="Chromosome"/>
</dbReference>
<dbReference type="GO" id="GO:0000428">
    <property type="term" value="C:DNA-directed RNA polymerase complex"/>
    <property type="evidence" value="ECO:0007669"/>
    <property type="project" value="UniProtKB-KW"/>
</dbReference>
<dbReference type="GO" id="GO:0003677">
    <property type="term" value="F:DNA binding"/>
    <property type="evidence" value="ECO:0007669"/>
    <property type="project" value="UniProtKB-UniRule"/>
</dbReference>
<dbReference type="GO" id="GO:0003899">
    <property type="term" value="F:DNA-directed RNA polymerase activity"/>
    <property type="evidence" value="ECO:0007669"/>
    <property type="project" value="UniProtKB-UniRule"/>
</dbReference>
<dbReference type="GO" id="GO:0000287">
    <property type="term" value="F:magnesium ion binding"/>
    <property type="evidence" value="ECO:0007669"/>
    <property type="project" value="UniProtKB-UniRule"/>
</dbReference>
<dbReference type="GO" id="GO:0008270">
    <property type="term" value="F:zinc ion binding"/>
    <property type="evidence" value="ECO:0007669"/>
    <property type="project" value="UniProtKB-UniRule"/>
</dbReference>
<dbReference type="GO" id="GO:0006351">
    <property type="term" value="P:DNA-templated transcription"/>
    <property type="evidence" value="ECO:0007669"/>
    <property type="project" value="UniProtKB-UniRule"/>
</dbReference>
<dbReference type="CDD" id="cd02655">
    <property type="entry name" value="RNAP_beta'_C"/>
    <property type="match status" value="1"/>
</dbReference>
<dbReference type="CDD" id="cd01609">
    <property type="entry name" value="RNAP_beta'_N"/>
    <property type="match status" value="1"/>
</dbReference>
<dbReference type="FunFam" id="1.10.150.390:FF:000002">
    <property type="entry name" value="DNA-directed RNA polymerase subunit beta"/>
    <property type="match status" value="1"/>
</dbReference>
<dbReference type="FunFam" id="1.10.40.90:FF:000001">
    <property type="entry name" value="DNA-directed RNA polymerase subunit beta"/>
    <property type="match status" value="1"/>
</dbReference>
<dbReference type="FunFam" id="4.10.860.120:FF:000001">
    <property type="entry name" value="DNA-directed RNA polymerase subunit beta"/>
    <property type="match status" value="1"/>
</dbReference>
<dbReference type="Gene3D" id="1.10.132.30">
    <property type="match status" value="1"/>
</dbReference>
<dbReference type="Gene3D" id="1.10.150.390">
    <property type="match status" value="1"/>
</dbReference>
<dbReference type="Gene3D" id="1.10.1790.20">
    <property type="match status" value="1"/>
</dbReference>
<dbReference type="Gene3D" id="1.10.40.90">
    <property type="match status" value="1"/>
</dbReference>
<dbReference type="Gene3D" id="2.40.40.20">
    <property type="match status" value="1"/>
</dbReference>
<dbReference type="Gene3D" id="2.40.50.100">
    <property type="match status" value="1"/>
</dbReference>
<dbReference type="Gene3D" id="4.10.860.120">
    <property type="entry name" value="RNA polymerase II, clamp domain"/>
    <property type="match status" value="1"/>
</dbReference>
<dbReference type="Gene3D" id="1.10.274.100">
    <property type="entry name" value="RNA polymerase Rpb1, domain 3"/>
    <property type="match status" value="1"/>
</dbReference>
<dbReference type="HAMAP" id="MF_01322">
    <property type="entry name" value="RNApol_bact_RpoC"/>
    <property type="match status" value="1"/>
</dbReference>
<dbReference type="InterPro" id="IPR045867">
    <property type="entry name" value="DNA-dir_RpoC_beta_prime"/>
</dbReference>
<dbReference type="InterPro" id="IPR012754">
    <property type="entry name" value="DNA-dir_RpoC_beta_prime_bact"/>
</dbReference>
<dbReference type="InterPro" id="IPR000722">
    <property type="entry name" value="RNA_pol_asu"/>
</dbReference>
<dbReference type="InterPro" id="IPR006592">
    <property type="entry name" value="RNA_pol_N"/>
</dbReference>
<dbReference type="InterPro" id="IPR007080">
    <property type="entry name" value="RNA_pol_Rpb1_1"/>
</dbReference>
<dbReference type="InterPro" id="IPR007066">
    <property type="entry name" value="RNA_pol_Rpb1_3"/>
</dbReference>
<dbReference type="InterPro" id="IPR042102">
    <property type="entry name" value="RNA_pol_Rpb1_3_sf"/>
</dbReference>
<dbReference type="InterPro" id="IPR007083">
    <property type="entry name" value="RNA_pol_Rpb1_4"/>
</dbReference>
<dbReference type="InterPro" id="IPR007081">
    <property type="entry name" value="RNA_pol_Rpb1_5"/>
</dbReference>
<dbReference type="InterPro" id="IPR044893">
    <property type="entry name" value="RNA_pol_Rpb1_clamp_domain"/>
</dbReference>
<dbReference type="InterPro" id="IPR038120">
    <property type="entry name" value="Rpb1_funnel_sf"/>
</dbReference>
<dbReference type="NCBIfam" id="TIGR02386">
    <property type="entry name" value="rpoC_TIGR"/>
    <property type="match status" value="1"/>
</dbReference>
<dbReference type="PANTHER" id="PTHR19376">
    <property type="entry name" value="DNA-DIRECTED RNA POLYMERASE"/>
    <property type="match status" value="1"/>
</dbReference>
<dbReference type="PANTHER" id="PTHR19376:SF54">
    <property type="entry name" value="DNA-DIRECTED RNA POLYMERASE SUBUNIT BETA"/>
    <property type="match status" value="1"/>
</dbReference>
<dbReference type="Pfam" id="PF04997">
    <property type="entry name" value="RNA_pol_Rpb1_1"/>
    <property type="match status" value="1"/>
</dbReference>
<dbReference type="Pfam" id="PF00623">
    <property type="entry name" value="RNA_pol_Rpb1_2"/>
    <property type="match status" value="2"/>
</dbReference>
<dbReference type="Pfam" id="PF04983">
    <property type="entry name" value="RNA_pol_Rpb1_3"/>
    <property type="match status" value="1"/>
</dbReference>
<dbReference type="Pfam" id="PF05000">
    <property type="entry name" value="RNA_pol_Rpb1_4"/>
    <property type="match status" value="1"/>
</dbReference>
<dbReference type="Pfam" id="PF04998">
    <property type="entry name" value="RNA_pol_Rpb1_5"/>
    <property type="match status" value="2"/>
</dbReference>
<dbReference type="SMART" id="SM00663">
    <property type="entry name" value="RPOLA_N"/>
    <property type="match status" value="1"/>
</dbReference>
<dbReference type="SUPFAM" id="SSF64484">
    <property type="entry name" value="beta and beta-prime subunits of DNA dependent RNA-polymerase"/>
    <property type="match status" value="1"/>
</dbReference>
<proteinExistence type="inferred from homology"/>
<organism>
    <name type="scientific">Bacillus cereus (strain ATCC 10987 / NRS 248)</name>
    <dbReference type="NCBI Taxonomy" id="222523"/>
    <lineage>
        <taxon>Bacteria</taxon>
        <taxon>Bacillati</taxon>
        <taxon>Bacillota</taxon>
        <taxon>Bacilli</taxon>
        <taxon>Bacillales</taxon>
        <taxon>Bacillaceae</taxon>
        <taxon>Bacillus</taxon>
        <taxon>Bacillus cereus group</taxon>
    </lineage>
</organism>
<gene>
    <name evidence="1" type="primary">rpoC</name>
    <name type="ordered locus">BCE_0103</name>
</gene>
<protein>
    <recommendedName>
        <fullName evidence="1">DNA-directed RNA polymerase subunit beta'</fullName>
        <shortName evidence="1">RNAP subunit beta'</shortName>
        <ecNumber evidence="1">2.7.7.6</ecNumber>
    </recommendedName>
    <alternativeName>
        <fullName evidence="1">RNA polymerase subunit beta'</fullName>
    </alternativeName>
    <alternativeName>
        <fullName evidence="1">Transcriptase subunit beta'</fullName>
    </alternativeName>
</protein>
<accession>Q73FA3</accession>
<evidence type="ECO:0000255" key="1">
    <source>
        <dbReference type="HAMAP-Rule" id="MF_01322"/>
    </source>
</evidence>
<comment type="function">
    <text evidence="1">DNA-dependent RNA polymerase catalyzes the transcription of DNA into RNA using the four ribonucleoside triphosphates as substrates.</text>
</comment>
<comment type="catalytic activity">
    <reaction evidence="1">
        <text>RNA(n) + a ribonucleoside 5'-triphosphate = RNA(n+1) + diphosphate</text>
        <dbReference type="Rhea" id="RHEA:21248"/>
        <dbReference type="Rhea" id="RHEA-COMP:14527"/>
        <dbReference type="Rhea" id="RHEA-COMP:17342"/>
        <dbReference type="ChEBI" id="CHEBI:33019"/>
        <dbReference type="ChEBI" id="CHEBI:61557"/>
        <dbReference type="ChEBI" id="CHEBI:140395"/>
        <dbReference type="EC" id="2.7.7.6"/>
    </reaction>
</comment>
<comment type="cofactor">
    <cofactor evidence="1">
        <name>Mg(2+)</name>
        <dbReference type="ChEBI" id="CHEBI:18420"/>
    </cofactor>
    <text evidence="1">Binds 1 Mg(2+) ion per subunit.</text>
</comment>
<comment type="cofactor">
    <cofactor evidence="1">
        <name>Zn(2+)</name>
        <dbReference type="ChEBI" id="CHEBI:29105"/>
    </cofactor>
    <text evidence="1">Binds 2 Zn(2+) ions per subunit.</text>
</comment>
<comment type="subunit">
    <text evidence="1">The RNAP catalytic core consists of 2 alpha, 1 beta, 1 beta' and 1 omega subunit. When a sigma factor is associated with the core the holoenzyme is formed, which can initiate transcription.</text>
</comment>
<comment type="similarity">
    <text evidence="1">Belongs to the RNA polymerase beta' chain family.</text>
</comment>
<name>RPOC_BACC1</name>
<sequence>MIDVNNFEYMKIGLASPDKIRSWSYGEVKKPETINYRTLKPEKDGLFCERIFGPQKDWECHCGKYKRVRYKGVVCDRCGVEVTRAKVRRERMGHIELAAPVSHIWYFKGIPSRMGLVLDMSPRALEEVIYFASYVVTESGDTPLDKKQLLSEKEYRAYRDRYGSTFQAAMGAEAIKKLLQDIDLDKEVDFLKEELKTAQGQRRTRAIKRLEVLEAFRNSGNEPSWMILDVLPVIPPELRPMVQLDGGRFATSDLNDLYRRVINRNNRLKRLLDLGAPSIIVQNEKRMLQEAVDALIDNGRRGRPVTGPGNRPLKSLSHMLKGKQGRFRQNLLGKRVDYSGRSVIVVGPNLKMYQCGLPKEMALELFKPFVMKELVEKGLAHNIKSAKRKIERVQPEVWDVLESVIKEHPVLLNRAPTLHRLGIQAFEPTLVEGRAIRLHPLVCTAYNADFDGDQMAVHVPLSSEAQAEARLLMLAAQNILNPKDGKPVVTPSQDMVLGNYYLTLEREGAIGEGMVFKDANEALLAYQNGYVHLHTRVAVAASAVNNATFTEEQKSMLLLTTVGKLIFNEILPESFPYINEPTNSNLEKETPAKYFVEKGANIKEIIASREEVAPFSKKILGNIIAEVFKRFKITETSRMLDRMKNLGFKYSTKAGITVGVSDILVLGEKDEILHEAQAKVDNVIKQFRRGLITEEERYDRVISIWSNAKDVIQGKLMKSLNKRNPIFMMSDSGARGNASNFTQLAGMRGLMANPSGRIIELPIKSSFREGLTVLEYFISTHGARKGLADTALKTADSGYLTRRLVDVAQDVIVREDDCGTDRGLLIGAIKEGNEVIESLYDRLVGRFARKTVKHPETGEVLVAENQLITEDIAHIVENSGVETVNIRSAFTCNTRHGVCKKCYGRNLATGTDVEVGEAVGIIAAQSIGEPGTQLTMRTFHTGGVAGDDITQGLPRIQEIFEARNPKGQAVISEIDGVIAAINDVKDRQEVVVQGEVETRTYAIPYGARLKVIPGQQISHGKELTEGSIDPKELLKVTDITAVQEYLLREVQKVYRMQGVEIGDKHVEVMVRQMLRKVRVSDAGETDVLPGTLLDIHQFTDANAKVLLQGKQPATARPVLLGITKASLETDSFLSAASFQETTRVLTDAAIKGKRDELLGLKENVIIGKLVPAGTGMNRYRKVDLVKTTQDDMNVENDEVYVEQ</sequence>
<keyword id="KW-0240">DNA-directed RNA polymerase</keyword>
<keyword id="KW-0460">Magnesium</keyword>
<keyword id="KW-0479">Metal-binding</keyword>
<keyword id="KW-0548">Nucleotidyltransferase</keyword>
<keyword id="KW-0804">Transcription</keyword>
<keyword id="KW-0808">Transferase</keyword>
<keyword id="KW-0862">Zinc</keyword>